<accession>Q39VS7</accession>
<sequence length="65" mass="7411">MPKIKTNRGAAKRFRKTASGKIKRNSAFTSHILTSKTRKRKRQLRSSSIVAAVDQKNIARLIPYK</sequence>
<keyword id="KW-1185">Reference proteome</keyword>
<keyword id="KW-0687">Ribonucleoprotein</keyword>
<keyword id="KW-0689">Ribosomal protein</keyword>
<name>RL35_GEOMG</name>
<organism>
    <name type="scientific">Geobacter metallireducens (strain ATCC 53774 / DSM 7210 / GS-15)</name>
    <dbReference type="NCBI Taxonomy" id="269799"/>
    <lineage>
        <taxon>Bacteria</taxon>
        <taxon>Pseudomonadati</taxon>
        <taxon>Thermodesulfobacteriota</taxon>
        <taxon>Desulfuromonadia</taxon>
        <taxon>Geobacterales</taxon>
        <taxon>Geobacteraceae</taxon>
        <taxon>Geobacter</taxon>
    </lineage>
</organism>
<comment type="similarity">
    <text evidence="1">Belongs to the bacterial ribosomal protein bL35 family.</text>
</comment>
<gene>
    <name evidence="1" type="primary">rpmI</name>
    <name type="ordered locus">Gmet_1413</name>
</gene>
<protein>
    <recommendedName>
        <fullName evidence="1">Large ribosomal subunit protein bL35</fullName>
    </recommendedName>
    <alternativeName>
        <fullName evidence="3">50S ribosomal protein L35</fullName>
    </alternativeName>
</protein>
<proteinExistence type="inferred from homology"/>
<evidence type="ECO:0000255" key="1">
    <source>
        <dbReference type="HAMAP-Rule" id="MF_00514"/>
    </source>
</evidence>
<evidence type="ECO:0000256" key="2">
    <source>
        <dbReference type="SAM" id="MobiDB-lite"/>
    </source>
</evidence>
<evidence type="ECO:0000305" key="3"/>
<feature type="chain" id="PRO_0000258684" description="Large ribosomal subunit protein bL35">
    <location>
        <begin position="1"/>
        <end position="65"/>
    </location>
</feature>
<feature type="region of interest" description="Disordered" evidence="2">
    <location>
        <begin position="1"/>
        <end position="47"/>
    </location>
</feature>
<feature type="compositionally biased region" description="Basic residues" evidence="2">
    <location>
        <begin position="10"/>
        <end position="24"/>
    </location>
</feature>
<feature type="compositionally biased region" description="Polar residues" evidence="2">
    <location>
        <begin position="26"/>
        <end position="35"/>
    </location>
</feature>
<dbReference type="EMBL" id="CP000148">
    <property type="protein sequence ID" value="ABB31647.1"/>
    <property type="molecule type" value="Genomic_DNA"/>
</dbReference>
<dbReference type="RefSeq" id="WP_004511654.1">
    <property type="nucleotide sequence ID" value="NC_007517.1"/>
</dbReference>
<dbReference type="SMR" id="Q39VS7"/>
<dbReference type="STRING" id="269799.Gmet_1413"/>
<dbReference type="KEGG" id="gme:Gmet_1413"/>
<dbReference type="eggNOG" id="COG0291">
    <property type="taxonomic scope" value="Bacteria"/>
</dbReference>
<dbReference type="HOGENOM" id="CLU_169643_4_3_7"/>
<dbReference type="Proteomes" id="UP000007073">
    <property type="component" value="Chromosome"/>
</dbReference>
<dbReference type="GO" id="GO:0022625">
    <property type="term" value="C:cytosolic large ribosomal subunit"/>
    <property type="evidence" value="ECO:0007669"/>
    <property type="project" value="TreeGrafter"/>
</dbReference>
<dbReference type="GO" id="GO:0003735">
    <property type="term" value="F:structural constituent of ribosome"/>
    <property type="evidence" value="ECO:0007669"/>
    <property type="project" value="InterPro"/>
</dbReference>
<dbReference type="GO" id="GO:0006412">
    <property type="term" value="P:translation"/>
    <property type="evidence" value="ECO:0007669"/>
    <property type="project" value="UniProtKB-UniRule"/>
</dbReference>
<dbReference type="FunFam" id="4.10.410.60:FF:000001">
    <property type="entry name" value="50S ribosomal protein L35"/>
    <property type="match status" value="1"/>
</dbReference>
<dbReference type="Gene3D" id="4.10.410.60">
    <property type="match status" value="1"/>
</dbReference>
<dbReference type="HAMAP" id="MF_00514">
    <property type="entry name" value="Ribosomal_bL35"/>
    <property type="match status" value="1"/>
</dbReference>
<dbReference type="InterPro" id="IPR001706">
    <property type="entry name" value="Ribosomal_bL35"/>
</dbReference>
<dbReference type="InterPro" id="IPR021137">
    <property type="entry name" value="Ribosomal_bL35-like"/>
</dbReference>
<dbReference type="InterPro" id="IPR018265">
    <property type="entry name" value="Ribosomal_bL35_CS"/>
</dbReference>
<dbReference type="InterPro" id="IPR037229">
    <property type="entry name" value="Ribosomal_bL35_sf"/>
</dbReference>
<dbReference type="NCBIfam" id="TIGR00001">
    <property type="entry name" value="rpmI_bact"/>
    <property type="match status" value="1"/>
</dbReference>
<dbReference type="PANTHER" id="PTHR33343">
    <property type="entry name" value="54S RIBOSOMAL PROTEIN BL35M"/>
    <property type="match status" value="1"/>
</dbReference>
<dbReference type="PANTHER" id="PTHR33343:SF1">
    <property type="entry name" value="LARGE RIBOSOMAL SUBUNIT PROTEIN BL35M"/>
    <property type="match status" value="1"/>
</dbReference>
<dbReference type="Pfam" id="PF01632">
    <property type="entry name" value="Ribosomal_L35p"/>
    <property type="match status" value="1"/>
</dbReference>
<dbReference type="PRINTS" id="PR00064">
    <property type="entry name" value="RIBOSOMALL35"/>
</dbReference>
<dbReference type="SUPFAM" id="SSF143034">
    <property type="entry name" value="L35p-like"/>
    <property type="match status" value="1"/>
</dbReference>
<dbReference type="PROSITE" id="PS00936">
    <property type="entry name" value="RIBOSOMAL_L35"/>
    <property type="match status" value="1"/>
</dbReference>
<reference key="1">
    <citation type="journal article" date="2009" name="BMC Microbiol.">
        <title>The genome sequence of Geobacter metallireducens: features of metabolism, physiology and regulation common and dissimilar to Geobacter sulfurreducens.</title>
        <authorList>
            <person name="Aklujkar M."/>
            <person name="Krushkal J."/>
            <person name="DiBartolo G."/>
            <person name="Lapidus A."/>
            <person name="Land M.L."/>
            <person name="Lovley D.R."/>
        </authorList>
    </citation>
    <scope>NUCLEOTIDE SEQUENCE [LARGE SCALE GENOMIC DNA]</scope>
    <source>
        <strain>ATCC 53774 / DSM 7210 / GS-15</strain>
    </source>
</reference>